<reference key="1">
    <citation type="journal article" date="2009" name="BMC Genomics">
        <title>Conservation in the face of diversity: multistrain analysis of an intracellular bacterium.</title>
        <authorList>
            <person name="Dark M.J."/>
            <person name="Herndon D.R."/>
            <person name="Kappmeyer L.S."/>
            <person name="Gonzales M.P."/>
            <person name="Nordeen E."/>
            <person name="Palmer G.H."/>
            <person name="Knowles D.P. Jr."/>
            <person name="Brayton K.A."/>
        </authorList>
    </citation>
    <scope>NUCLEOTIDE SEQUENCE [LARGE SCALE GENOMIC DNA]</scope>
    <source>
        <strain>Florida</strain>
    </source>
</reference>
<keyword id="KW-1185">Reference proteome</keyword>
<keyword id="KW-0687">Ribonucleoprotein</keyword>
<keyword id="KW-0689">Ribosomal protein</keyword>
<sequence length="66" mass="7399">MPKLKTKSSAKKRFKVTASGRVMSAQSTKRHGMTKRSKRSLRTRRGIAQMSAPDARIVASFMPYSL</sequence>
<organism>
    <name type="scientific">Anaplasma marginale (strain Florida)</name>
    <dbReference type="NCBI Taxonomy" id="320483"/>
    <lineage>
        <taxon>Bacteria</taxon>
        <taxon>Pseudomonadati</taxon>
        <taxon>Pseudomonadota</taxon>
        <taxon>Alphaproteobacteria</taxon>
        <taxon>Rickettsiales</taxon>
        <taxon>Anaplasmataceae</taxon>
        <taxon>Anaplasma</taxon>
    </lineage>
</organism>
<proteinExistence type="inferred from homology"/>
<evidence type="ECO:0000255" key="1">
    <source>
        <dbReference type="HAMAP-Rule" id="MF_00514"/>
    </source>
</evidence>
<evidence type="ECO:0000256" key="2">
    <source>
        <dbReference type="SAM" id="MobiDB-lite"/>
    </source>
</evidence>
<evidence type="ECO:0000305" key="3"/>
<comment type="similarity">
    <text evidence="1">Belongs to the bacterial ribosomal protein bL35 family.</text>
</comment>
<name>RL35_ANAMF</name>
<accession>B9KHH6</accession>
<feature type="chain" id="PRO_1000146115" description="Large ribosomal subunit protein bL35">
    <location>
        <begin position="1"/>
        <end position="66"/>
    </location>
</feature>
<feature type="region of interest" description="Disordered" evidence="2">
    <location>
        <begin position="1"/>
        <end position="49"/>
    </location>
</feature>
<feature type="compositionally biased region" description="Basic residues" evidence="2">
    <location>
        <begin position="1"/>
        <end position="15"/>
    </location>
</feature>
<feature type="compositionally biased region" description="Basic residues" evidence="2">
    <location>
        <begin position="28"/>
        <end position="45"/>
    </location>
</feature>
<protein>
    <recommendedName>
        <fullName evidence="1">Large ribosomal subunit protein bL35</fullName>
    </recommendedName>
    <alternativeName>
        <fullName evidence="3">50S ribosomal protein L35</fullName>
    </alternativeName>
</protein>
<gene>
    <name evidence="1" type="primary">rpmI</name>
    <name type="ordered locus">AMF_1033</name>
</gene>
<dbReference type="EMBL" id="CP001079">
    <property type="protein sequence ID" value="ACM48938.1"/>
    <property type="molecule type" value="Genomic_DNA"/>
</dbReference>
<dbReference type="RefSeq" id="WP_010262434.1">
    <property type="nucleotide sequence ID" value="NZ_AFMS01000054.1"/>
</dbReference>
<dbReference type="SMR" id="B9KHH6"/>
<dbReference type="STRING" id="320483.AMF_1033"/>
<dbReference type="GeneID" id="31479917"/>
<dbReference type="KEGG" id="amf:AMF_1033"/>
<dbReference type="eggNOG" id="COG0291">
    <property type="taxonomic scope" value="Bacteria"/>
</dbReference>
<dbReference type="HOGENOM" id="CLU_169643_2_1_5"/>
<dbReference type="Proteomes" id="UP000007307">
    <property type="component" value="Chromosome"/>
</dbReference>
<dbReference type="GO" id="GO:1990904">
    <property type="term" value="C:ribonucleoprotein complex"/>
    <property type="evidence" value="ECO:0007669"/>
    <property type="project" value="UniProtKB-KW"/>
</dbReference>
<dbReference type="GO" id="GO:0005840">
    <property type="term" value="C:ribosome"/>
    <property type="evidence" value="ECO:0007669"/>
    <property type="project" value="UniProtKB-KW"/>
</dbReference>
<dbReference type="GO" id="GO:0003735">
    <property type="term" value="F:structural constituent of ribosome"/>
    <property type="evidence" value="ECO:0007669"/>
    <property type="project" value="InterPro"/>
</dbReference>
<dbReference type="GO" id="GO:0006412">
    <property type="term" value="P:translation"/>
    <property type="evidence" value="ECO:0007669"/>
    <property type="project" value="UniProtKB-UniRule"/>
</dbReference>
<dbReference type="FunFam" id="4.10.410.60:FF:000001">
    <property type="entry name" value="50S ribosomal protein L35"/>
    <property type="match status" value="1"/>
</dbReference>
<dbReference type="Gene3D" id="4.10.410.60">
    <property type="match status" value="1"/>
</dbReference>
<dbReference type="HAMAP" id="MF_00514">
    <property type="entry name" value="Ribosomal_bL35"/>
    <property type="match status" value="1"/>
</dbReference>
<dbReference type="InterPro" id="IPR001706">
    <property type="entry name" value="Ribosomal_bL35"/>
</dbReference>
<dbReference type="InterPro" id="IPR021137">
    <property type="entry name" value="Ribosomal_bL35-like"/>
</dbReference>
<dbReference type="InterPro" id="IPR018265">
    <property type="entry name" value="Ribosomal_bL35_CS"/>
</dbReference>
<dbReference type="InterPro" id="IPR037229">
    <property type="entry name" value="Ribosomal_bL35_sf"/>
</dbReference>
<dbReference type="NCBIfam" id="TIGR00001">
    <property type="entry name" value="rpmI_bact"/>
    <property type="match status" value="1"/>
</dbReference>
<dbReference type="Pfam" id="PF01632">
    <property type="entry name" value="Ribosomal_L35p"/>
    <property type="match status" value="1"/>
</dbReference>
<dbReference type="PRINTS" id="PR00064">
    <property type="entry name" value="RIBOSOMALL35"/>
</dbReference>
<dbReference type="SUPFAM" id="SSF143034">
    <property type="entry name" value="L35p-like"/>
    <property type="match status" value="1"/>
</dbReference>
<dbReference type="PROSITE" id="PS00936">
    <property type="entry name" value="RIBOSOMAL_L35"/>
    <property type="match status" value="1"/>
</dbReference>